<sequence>MTDFPPLVIDYHGSRLAGVDEVGRGPLVGAVVAAAVILDPARPIEGLADSKTLSEKRRLALADAIREQAAACAVAEASAEEIDALNIFHATHLAMRRAIDALPVTAEYLLVDGNRMPGHHVPGQCVVKGDRRHAAIGAASILAKVTRDAQMVALHERHPEYGFARHKGYPTREHLAALERLGPLEEHRRSFAPVKQWQLL</sequence>
<evidence type="ECO:0000255" key="1">
    <source>
        <dbReference type="HAMAP-Rule" id="MF_00052"/>
    </source>
</evidence>
<evidence type="ECO:0000255" key="2">
    <source>
        <dbReference type="PROSITE-ProRule" id="PRU01319"/>
    </source>
</evidence>
<gene>
    <name evidence="1" type="primary">rnhB</name>
    <name type="ordered locus">Csal_0577</name>
</gene>
<feature type="chain" id="PRO_0000334875" description="Ribonuclease HII">
    <location>
        <begin position="1"/>
        <end position="200"/>
    </location>
</feature>
<feature type="domain" description="RNase H type-2" evidence="2">
    <location>
        <begin position="14"/>
        <end position="200"/>
    </location>
</feature>
<feature type="binding site" evidence="1">
    <location>
        <position position="20"/>
    </location>
    <ligand>
        <name>a divalent metal cation</name>
        <dbReference type="ChEBI" id="CHEBI:60240"/>
    </ligand>
</feature>
<feature type="binding site" evidence="1">
    <location>
        <position position="21"/>
    </location>
    <ligand>
        <name>a divalent metal cation</name>
        <dbReference type="ChEBI" id="CHEBI:60240"/>
    </ligand>
</feature>
<feature type="binding site" evidence="1">
    <location>
        <position position="112"/>
    </location>
    <ligand>
        <name>a divalent metal cation</name>
        <dbReference type="ChEBI" id="CHEBI:60240"/>
    </ligand>
</feature>
<accession>Q1R019</accession>
<keyword id="KW-0963">Cytoplasm</keyword>
<keyword id="KW-0255">Endonuclease</keyword>
<keyword id="KW-0378">Hydrolase</keyword>
<keyword id="KW-0464">Manganese</keyword>
<keyword id="KW-0479">Metal-binding</keyword>
<keyword id="KW-0540">Nuclease</keyword>
<keyword id="KW-1185">Reference proteome</keyword>
<comment type="function">
    <text evidence="1">Endonuclease that specifically degrades the RNA of RNA-DNA hybrids.</text>
</comment>
<comment type="catalytic activity">
    <reaction evidence="1">
        <text>Endonucleolytic cleavage to 5'-phosphomonoester.</text>
        <dbReference type="EC" id="3.1.26.4"/>
    </reaction>
</comment>
<comment type="cofactor">
    <cofactor evidence="1">
        <name>Mn(2+)</name>
        <dbReference type="ChEBI" id="CHEBI:29035"/>
    </cofactor>
    <cofactor evidence="1">
        <name>Mg(2+)</name>
        <dbReference type="ChEBI" id="CHEBI:18420"/>
    </cofactor>
    <text evidence="1">Manganese or magnesium. Binds 1 divalent metal ion per monomer in the absence of substrate. May bind a second metal ion after substrate binding.</text>
</comment>
<comment type="subcellular location">
    <subcellularLocation>
        <location evidence="1">Cytoplasm</location>
    </subcellularLocation>
</comment>
<comment type="similarity">
    <text evidence="1">Belongs to the RNase HII family.</text>
</comment>
<dbReference type="EC" id="3.1.26.4" evidence="1"/>
<dbReference type="EMBL" id="CP000285">
    <property type="protein sequence ID" value="ABE57939.1"/>
    <property type="molecule type" value="Genomic_DNA"/>
</dbReference>
<dbReference type="RefSeq" id="WP_011505885.1">
    <property type="nucleotide sequence ID" value="NC_007963.1"/>
</dbReference>
<dbReference type="SMR" id="Q1R019"/>
<dbReference type="STRING" id="290398.Csal_0577"/>
<dbReference type="GeneID" id="95333333"/>
<dbReference type="KEGG" id="csa:Csal_0577"/>
<dbReference type="eggNOG" id="COG0164">
    <property type="taxonomic scope" value="Bacteria"/>
</dbReference>
<dbReference type="HOGENOM" id="CLU_036532_3_2_6"/>
<dbReference type="OrthoDB" id="9803420at2"/>
<dbReference type="Proteomes" id="UP000000239">
    <property type="component" value="Chromosome"/>
</dbReference>
<dbReference type="GO" id="GO:0005737">
    <property type="term" value="C:cytoplasm"/>
    <property type="evidence" value="ECO:0007669"/>
    <property type="project" value="UniProtKB-SubCell"/>
</dbReference>
<dbReference type="GO" id="GO:0032299">
    <property type="term" value="C:ribonuclease H2 complex"/>
    <property type="evidence" value="ECO:0007669"/>
    <property type="project" value="TreeGrafter"/>
</dbReference>
<dbReference type="GO" id="GO:0030145">
    <property type="term" value="F:manganese ion binding"/>
    <property type="evidence" value="ECO:0007669"/>
    <property type="project" value="UniProtKB-UniRule"/>
</dbReference>
<dbReference type="GO" id="GO:0003723">
    <property type="term" value="F:RNA binding"/>
    <property type="evidence" value="ECO:0007669"/>
    <property type="project" value="InterPro"/>
</dbReference>
<dbReference type="GO" id="GO:0004523">
    <property type="term" value="F:RNA-DNA hybrid ribonuclease activity"/>
    <property type="evidence" value="ECO:0007669"/>
    <property type="project" value="UniProtKB-UniRule"/>
</dbReference>
<dbReference type="GO" id="GO:0043137">
    <property type="term" value="P:DNA replication, removal of RNA primer"/>
    <property type="evidence" value="ECO:0007669"/>
    <property type="project" value="TreeGrafter"/>
</dbReference>
<dbReference type="GO" id="GO:0006298">
    <property type="term" value="P:mismatch repair"/>
    <property type="evidence" value="ECO:0007669"/>
    <property type="project" value="TreeGrafter"/>
</dbReference>
<dbReference type="CDD" id="cd07182">
    <property type="entry name" value="RNase_HII_bacteria_HII_like"/>
    <property type="match status" value="1"/>
</dbReference>
<dbReference type="FunFam" id="3.30.420.10:FF:000006">
    <property type="entry name" value="Ribonuclease HII"/>
    <property type="match status" value="1"/>
</dbReference>
<dbReference type="Gene3D" id="3.30.420.10">
    <property type="entry name" value="Ribonuclease H-like superfamily/Ribonuclease H"/>
    <property type="match status" value="1"/>
</dbReference>
<dbReference type="HAMAP" id="MF_00052_B">
    <property type="entry name" value="RNase_HII_B"/>
    <property type="match status" value="1"/>
</dbReference>
<dbReference type="InterPro" id="IPR022898">
    <property type="entry name" value="RNase_HII"/>
</dbReference>
<dbReference type="InterPro" id="IPR001352">
    <property type="entry name" value="RNase_HII/HIII"/>
</dbReference>
<dbReference type="InterPro" id="IPR024567">
    <property type="entry name" value="RNase_HII/HIII_dom"/>
</dbReference>
<dbReference type="InterPro" id="IPR012337">
    <property type="entry name" value="RNaseH-like_sf"/>
</dbReference>
<dbReference type="InterPro" id="IPR036397">
    <property type="entry name" value="RNaseH_sf"/>
</dbReference>
<dbReference type="NCBIfam" id="NF000595">
    <property type="entry name" value="PRK00015.1-3"/>
    <property type="match status" value="1"/>
</dbReference>
<dbReference type="NCBIfam" id="NF000596">
    <property type="entry name" value="PRK00015.1-4"/>
    <property type="match status" value="1"/>
</dbReference>
<dbReference type="PANTHER" id="PTHR10954">
    <property type="entry name" value="RIBONUCLEASE H2 SUBUNIT A"/>
    <property type="match status" value="1"/>
</dbReference>
<dbReference type="PANTHER" id="PTHR10954:SF18">
    <property type="entry name" value="RIBONUCLEASE HII"/>
    <property type="match status" value="1"/>
</dbReference>
<dbReference type="Pfam" id="PF01351">
    <property type="entry name" value="RNase_HII"/>
    <property type="match status" value="1"/>
</dbReference>
<dbReference type="SUPFAM" id="SSF53098">
    <property type="entry name" value="Ribonuclease H-like"/>
    <property type="match status" value="1"/>
</dbReference>
<dbReference type="PROSITE" id="PS51975">
    <property type="entry name" value="RNASE_H_2"/>
    <property type="match status" value="1"/>
</dbReference>
<proteinExistence type="inferred from homology"/>
<reference key="1">
    <citation type="journal article" date="2011" name="Stand. Genomic Sci.">
        <title>Complete genome sequence of the halophilic and highly halotolerant Chromohalobacter salexigens type strain (1H11(T)).</title>
        <authorList>
            <person name="Copeland A."/>
            <person name="O'Connor K."/>
            <person name="Lucas S."/>
            <person name="Lapidus A."/>
            <person name="Berry K.W."/>
            <person name="Detter J.C."/>
            <person name="Del Rio T.G."/>
            <person name="Hammon N."/>
            <person name="Dalin E."/>
            <person name="Tice H."/>
            <person name="Pitluck S."/>
            <person name="Bruce D."/>
            <person name="Goodwin L."/>
            <person name="Han C."/>
            <person name="Tapia R."/>
            <person name="Saunders E."/>
            <person name="Schmutz J."/>
            <person name="Brettin T."/>
            <person name="Larimer F."/>
            <person name="Land M."/>
            <person name="Hauser L."/>
            <person name="Vargas C."/>
            <person name="Nieto J.J."/>
            <person name="Kyrpides N.C."/>
            <person name="Ivanova N."/>
            <person name="Goker M."/>
            <person name="Klenk H.P."/>
            <person name="Csonka L.N."/>
            <person name="Woyke T."/>
        </authorList>
    </citation>
    <scope>NUCLEOTIDE SEQUENCE [LARGE SCALE GENOMIC DNA]</scope>
    <source>
        <strain>ATCC BAA-138 / DSM 3043 / CIP 106854 / NCIMB 13768 / 1H11</strain>
    </source>
</reference>
<organism>
    <name type="scientific">Chromohalobacter salexigens (strain ATCC BAA-138 / DSM 3043 / CIP 106854 / NCIMB 13768 / 1H11)</name>
    <dbReference type="NCBI Taxonomy" id="290398"/>
    <lineage>
        <taxon>Bacteria</taxon>
        <taxon>Pseudomonadati</taxon>
        <taxon>Pseudomonadota</taxon>
        <taxon>Gammaproteobacteria</taxon>
        <taxon>Oceanospirillales</taxon>
        <taxon>Halomonadaceae</taxon>
        <taxon>Chromohalobacter</taxon>
    </lineage>
</organism>
<name>RNH2_CHRSD</name>
<protein>
    <recommendedName>
        <fullName evidence="1">Ribonuclease HII</fullName>
        <shortName evidence="1">RNase HII</shortName>
        <ecNumber evidence="1">3.1.26.4</ecNumber>
    </recommendedName>
</protein>